<feature type="chain" id="PRO_0000212054" description="Universal stress protein B">
    <location>
        <begin position="1"/>
        <end position="111"/>
    </location>
</feature>
<feature type="transmembrane region" description="Helical" evidence="1">
    <location>
        <begin position="1"/>
        <end position="21"/>
    </location>
</feature>
<feature type="transmembrane region" description="Helical" evidence="1">
    <location>
        <begin position="90"/>
        <end position="110"/>
    </location>
</feature>
<feature type="sequence conflict" description="In Ref. 3; AAS63497." evidence="2" ref="3">
    <original>F</original>
    <variation>V</variation>
    <location>
        <position position="49"/>
    </location>
</feature>
<proteinExistence type="inferred from homology"/>
<reference key="1">
    <citation type="journal article" date="2001" name="Nature">
        <title>Genome sequence of Yersinia pestis, the causative agent of plague.</title>
        <authorList>
            <person name="Parkhill J."/>
            <person name="Wren B.W."/>
            <person name="Thomson N.R."/>
            <person name="Titball R.W."/>
            <person name="Holden M.T.G."/>
            <person name="Prentice M.B."/>
            <person name="Sebaihia M."/>
            <person name="James K.D."/>
            <person name="Churcher C.M."/>
            <person name="Mungall K.L."/>
            <person name="Baker S."/>
            <person name="Basham D."/>
            <person name="Bentley S.D."/>
            <person name="Brooks K."/>
            <person name="Cerdeno-Tarraga A.-M."/>
            <person name="Chillingworth T."/>
            <person name="Cronin A."/>
            <person name="Davies R.M."/>
            <person name="Davis P."/>
            <person name="Dougan G."/>
            <person name="Feltwell T."/>
            <person name="Hamlin N."/>
            <person name="Holroyd S."/>
            <person name="Jagels K."/>
            <person name="Karlyshev A.V."/>
            <person name="Leather S."/>
            <person name="Moule S."/>
            <person name="Oyston P.C.F."/>
            <person name="Quail M.A."/>
            <person name="Rutherford K.M."/>
            <person name="Simmonds M."/>
            <person name="Skelton J."/>
            <person name="Stevens K."/>
            <person name="Whitehead S."/>
            <person name="Barrell B.G."/>
        </authorList>
    </citation>
    <scope>NUCLEOTIDE SEQUENCE [LARGE SCALE GENOMIC DNA]</scope>
    <source>
        <strain>CO-92 / Biovar Orientalis</strain>
    </source>
</reference>
<reference key="2">
    <citation type="journal article" date="2002" name="J. Bacteriol.">
        <title>Genome sequence of Yersinia pestis KIM.</title>
        <authorList>
            <person name="Deng W."/>
            <person name="Burland V."/>
            <person name="Plunkett G. III"/>
            <person name="Boutin A."/>
            <person name="Mayhew G.F."/>
            <person name="Liss P."/>
            <person name="Perna N.T."/>
            <person name="Rose D.J."/>
            <person name="Mau B."/>
            <person name="Zhou S."/>
            <person name="Schwartz D.C."/>
            <person name="Fetherston J.D."/>
            <person name="Lindler L.E."/>
            <person name="Brubaker R.R."/>
            <person name="Plano G.V."/>
            <person name="Straley S.C."/>
            <person name="McDonough K.A."/>
            <person name="Nilles M.L."/>
            <person name="Matson J.S."/>
            <person name="Blattner F.R."/>
            <person name="Perry R.D."/>
        </authorList>
    </citation>
    <scope>NUCLEOTIDE SEQUENCE [LARGE SCALE GENOMIC DNA]</scope>
    <source>
        <strain>KIM10+ / Biovar Mediaevalis</strain>
    </source>
</reference>
<reference key="3">
    <citation type="journal article" date="2004" name="DNA Res.">
        <title>Complete genome sequence of Yersinia pestis strain 91001, an isolate avirulent to humans.</title>
        <authorList>
            <person name="Song Y."/>
            <person name="Tong Z."/>
            <person name="Wang J."/>
            <person name="Wang L."/>
            <person name="Guo Z."/>
            <person name="Han Y."/>
            <person name="Zhang J."/>
            <person name="Pei D."/>
            <person name="Zhou D."/>
            <person name="Qin H."/>
            <person name="Pang X."/>
            <person name="Han Y."/>
            <person name="Zhai J."/>
            <person name="Li M."/>
            <person name="Cui B."/>
            <person name="Qi Z."/>
            <person name="Jin L."/>
            <person name="Dai R."/>
            <person name="Chen F."/>
            <person name="Li S."/>
            <person name="Ye C."/>
            <person name="Du Z."/>
            <person name="Lin W."/>
            <person name="Wang J."/>
            <person name="Yu J."/>
            <person name="Yang H."/>
            <person name="Wang J."/>
            <person name="Huang P."/>
            <person name="Yang R."/>
        </authorList>
    </citation>
    <scope>NUCLEOTIDE SEQUENCE [LARGE SCALE GENOMIC DNA]</scope>
    <source>
        <strain>91001 / Biovar Mediaevalis</strain>
    </source>
</reference>
<sequence>MISTVALFWALCVVCVVNMARYYSSLRALLVVLRGCDPLLYQYVDGGGFFTSHGQPSKQIRLVGYIFAQRYLDHHDPEFIRRCERLRGQFILTSALCGLVVVSLVALMLWY</sequence>
<protein>
    <recommendedName>
        <fullName evidence="1">Universal stress protein B</fullName>
    </recommendedName>
</protein>
<organism>
    <name type="scientific">Yersinia pestis</name>
    <dbReference type="NCBI Taxonomy" id="632"/>
    <lineage>
        <taxon>Bacteria</taxon>
        <taxon>Pseudomonadati</taxon>
        <taxon>Pseudomonadota</taxon>
        <taxon>Gammaproteobacteria</taxon>
        <taxon>Enterobacterales</taxon>
        <taxon>Yersiniaceae</taxon>
        <taxon>Yersinia</taxon>
    </lineage>
</organism>
<gene>
    <name evidence="1" type="primary">uspB</name>
    <name type="ordered locus">YPO3969</name>
    <name type="ordered locus">y3860</name>
    <name type="ordered locus">YP_3332</name>
</gene>
<comment type="subcellular location">
    <subcellularLocation>
        <location evidence="1">Cell inner membrane</location>
        <topology evidence="1">Multi-pass membrane protein</topology>
    </subcellularLocation>
</comment>
<comment type="similarity">
    <text evidence="1">Belongs to the universal stress protein B family.</text>
</comment>
<comment type="sequence caution" evidence="2">
    <conflict type="erroneous initiation">
        <sequence resource="EMBL-CDS" id="AAM87405"/>
    </conflict>
</comment>
<comment type="sequence caution" evidence="2">
    <conflict type="erroneous initiation">
        <sequence resource="EMBL-CDS" id="AAS63497"/>
    </conflict>
</comment>
<name>USPB_YERPE</name>
<evidence type="ECO:0000255" key="1">
    <source>
        <dbReference type="HAMAP-Rule" id="MF_01088"/>
    </source>
</evidence>
<evidence type="ECO:0000305" key="2"/>
<accession>Q8ZA50</accession>
<accession>Q0WA48</accession>
<accession>Q8CZK8</accession>
<dbReference type="EMBL" id="AL590842">
    <property type="protein sequence ID" value="CAL22550.1"/>
    <property type="molecule type" value="Genomic_DNA"/>
</dbReference>
<dbReference type="EMBL" id="AE009952">
    <property type="protein sequence ID" value="AAM87405.1"/>
    <property type="status" value="ALT_INIT"/>
    <property type="molecule type" value="Genomic_DNA"/>
</dbReference>
<dbReference type="EMBL" id="AE017042">
    <property type="protein sequence ID" value="AAS63497.1"/>
    <property type="status" value="ALT_INIT"/>
    <property type="molecule type" value="Genomic_DNA"/>
</dbReference>
<dbReference type="PIR" id="AC0483">
    <property type="entry name" value="AC0483"/>
</dbReference>
<dbReference type="RefSeq" id="WP_002209527.1">
    <property type="nucleotide sequence ID" value="NZ_WUCM01000026.1"/>
</dbReference>
<dbReference type="RefSeq" id="YP_002348840.1">
    <property type="nucleotide sequence ID" value="NC_003143.1"/>
</dbReference>
<dbReference type="STRING" id="214092.YPO3969"/>
<dbReference type="PaxDb" id="214092-YPO3969"/>
<dbReference type="DNASU" id="1148807"/>
<dbReference type="EnsemblBacteria" id="AAS63497">
    <property type="protein sequence ID" value="AAS63497"/>
    <property type="gene ID" value="YP_3332"/>
</dbReference>
<dbReference type="GeneID" id="96663308"/>
<dbReference type="KEGG" id="ype:YPO3969"/>
<dbReference type="KEGG" id="ypk:y3860"/>
<dbReference type="KEGG" id="ypm:YP_3332"/>
<dbReference type="PATRIC" id="fig|214092.21.peg.4500"/>
<dbReference type="eggNOG" id="ENOG502ZP3V">
    <property type="taxonomic scope" value="Bacteria"/>
</dbReference>
<dbReference type="HOGENOM" id="CLU_151816_0_0_6"/>
<dbReference type="OMA" id="THGQLNK"/>
<dbReference type="OrthoDB" id="6432605at2"/>
<dbReference type="Proteomes" id="UP000000815">
    <property type="component" value="Chromosome"/>
</dbReference>
<dbReference type="Proteomes" id="UP000001019">
    <property type="component" value="Chromosome"/>
</dbReference>
<dbReference type="Proteomes" id="UP000002490">
    <property type="component" value="Chromosome"/>
</dbReference>
<dbReference type="GO" id="GO:0005886">
    <property type="term" value="C:plasma membrane"/>
    <property type="evidence" value="ECO:0007669"/>
    <property type="project" value="UniProtKB-SubCell"/>
</dbReference>
<dbReference type="HAMAP" id="MF_01088">
    <property type="entry name" value="UspB"/>
    <property type="match status" value="1"/>
</dbReference>
<dbReference type="InterPro" id="IPR019598">
    <property type="entry name" value="Universal_stress_protein_B"/>
</dbReference>
<dbReference type="NCBIfam" id="NF003435">
    <property type="entry name" value="PRK04960.1"/>
    <property type="match status" value="1"/>
</dbReference>
<dbReference type="Pfam" id="PF10625">
    <property type="entry name" value="UspB"/>
    <property type="match status" value="1"/>
</dbReference>
<keyword id="KW-0997">Cell inner membrane</keyword>
<keyword id="KW-1003">Cell membrane</keyword>
<keyword id="KW-0472">Membrane</keyword>
<keyword id="KW-1185">Reference proteome</keyword>
<keyword id="KW-0812">Transmembrane</keyword>
<keyword id="KW-1133">Transmembrane helix</keyword>